<feature type="chain" id="PRO_0000128990" description="DNA-directed RNA polymerase subunit omega">
    <location>
        <begin position="1"/>
        <end position="90"/>
    </location>
</feature>
<feature type="helix" evidence="4">
    <location>
        <begin position="16"/>
        <end position="23"/>
    </location>
</feature>
<feature type="strand" evidence="4">
    <location>
        <begin position="24"/>
        <end position="26"/>
    </location>
</feature>
<feature type="helix" evidence="4">
    <location>
        <begin position="27"/>
        <end position="44"/>
    </location>
</feature>
<feature type="helix" evidence="4">
    <location>
        <begin position="67"/>
        <end position="77"/>
    </location>
</feature>
<feature type="strand" evidence="4">
    <location>
        <begin position="80"/>
        <end position="84"/>
    </location>
</feature>
<reference key="1">
    <citation type="journal article" date="2002" name="Nature">
        <title>Complete genome sequence of the model actinomycete Streptomyces coelicolor A3(2).</title>
        <authorList>
            <person name="Bentley S.D."/>
            <person name="Chater K.F."/>
            <person name="Cerdeno-Tarraga A.-M."/>
            <person name="Challis G.L."/>
            <person name="Thomson N.R."/>
            <person name="James K.D."/>
            <person name="Harris D.E."/>
            <person name="Quail M.A."/>
            <person name="Kieser H."/>
            <person name="Harper D."/>
            <person name="Bateman A."/>
            <person name="Brown S."/>
            <person name="Chandra G."/>
            <person name="Chen C.W."/>
            <person name="Collins M."/>
            <person name="Cronin A."/>
            <person name="Fraser A."/>
            <person name="Goble A."/>
            <person name="Hidalgo J."/>
            <person name="Hornsby T."/>
            <person name="Howarth S."/>
            <person name="Huang C.-H."/>
            <person name="Kieser T."/>
            <person name="Larke L."/>
            <person name="Murphy L.D."/>
            <person name="Oliver K."/>
            <person name="O'Neil S."/>
            <person name="Rabbinowitsch E."/>
            <person name="Rajandream M.A."/>
            <person name="Rutherford K.M."/>
            <person name="Rutter S."/>
            <person name="Seeger K."/>
            <person name="Saunders D."/>
            <person name="Sharp S."/>
            <person name="Squares R."/>
            <person name="Squares S."/>
            <person name="Taylor K."/>
            <person name="Warren T."/>
            <person name="Wietzorrek A."/>
            <person name="Woodward J.R."/>
            <person name="Barrell B.G."/>
            <person name="Parkhill J."/>
            <person name="Hopwood D.A."/>
        </authorList>
    </citation>
    <scope>NUCLEOTIDE SEQUENCE [LARGE SCALE GENOMIC DNA]</scope>
    <source>
        <strain>ATCC BAA-471 / A3(2) / M145</strain>
    </source>
</reference>
<reference key="2">
    <citation type="journal article" date="2001" name="Mol. Microbiol.">
        <title>Defining the disulphide stress response in Streptomyces coelicolor A3(2): identification of the sigmaR regulon.</title>
        <authorList>
            <person name="Paget M.S.B."/>
            <person name="Molle V."/>
            <person name="Cohen G."/>
            <person name="Aharonowitz Y."/>
            <person name="Buttner M.J."/>
        </authorList>
    </citation>
    <scope>IDENTIFICATION BY MASS SPECTROMETRY</scope>
    <scope>SUBUNIT</scope>
    <source>
        <strain>ATCC BAA-471 / A3(2) / M145</strain>
    </source>
</reference>
<comment type="function">
    <text evidence="1">Promotes RNA polymerase assembly. Latches the N- and C-terminal regions of the beta' subunit thereby facilitating its interaction with the beta and alpha subunits (By similarity).</text>
</comment>
<comment type="catalytic activity">
    <reaction>
        <text>RNA(n) + a ribonucleoside 5'-triphosphate = RNA(n+1) + diphosphate</text>
        <dbReference type="Rhea" id="RHEA:21248"/>
        <dbReference type="Rhea" id="RHEA-COMP:14527"/>
        <dbReference type="Rhea" id="RHEA-COMP:17342"/>
        <dbReference type="ChEBI" id="CHEBI:33019"/>
        <dbReference type="ChEBI" id="CHEBI:61557"/>
        <dbReference type="ChEBI" id="CHEBI:140395"/>
        <dbReference type="EC" id="2.7.7.6"/>
    </reaction>
</comment>
<comment type="subunit">
    <text evidence="2">The RNAP catalytic core consists of 2 alpha, 1 beta, 1 beta' and 1 omega subunit. When a sigma factor is associated with the core the holoenzyme is formed, which can initiate transcription.</text>
</comment>
<comment type="similarity">
    <text evidence="3">Belongs to the RNA polymerase subunit omega family.</text>
</comment>
<gene>
    <name type="primary">rpoZ</name>
    <name type="ordered locus">SCO1478</name>
    <name type="ORF">SC9C5.02c</name>
</gene>
<protein>
    <recommendedName>
        <fullName>DNA-directed RNA polymerase subunit omega</fullName>
        <shortName>RNAP omega subunit</shortName>
        <ecNumber>2.7.7.6</ecNumber>
    </recommendedName>
    <alternativeName>
        <fullName>RNA polymerase omega subunit</fullName>
    </alternativeName>
    <alternativeName>
        <fullName>Transcriptase subunit omega</fullName>
    </alternativeName>
</protein>
<proteinExistence type="evidence at protein level"/>
<organism>
    <name type="scientific">Streptomyces coelicolor (strain ATCC BAA-471 / A3(2) / M145)</name>
    <dbReference type="NCBI Taxonomy" id="100226"/>
    <lineage>
        <taxon>Bacteria</taxon>
        <taxon>Bacillati</taxon>
        <taxon>Actinomycetota</taxon>
        <taxon>Actinomycetes</taxon>
        <taxon>Kitasatosporales</taxon>
        <taxon>Streptomycetaceae</taxon>
        <taxon>Streptomyces</taxon>
        <taxon>Streptomyces albidoflavus group</taxon>
    </lineage>
</organism>
<dbReference type="EC" id="2.7.7.6"/>
<dbReference type="EMBL" id="AL939109">
    <property type="protein sequence ID" value="CAB93358.1"/>
    <property type="molecule type" value="Genomic_DNA"/>
</dbReference>
<dbReference type="RefSeq" id="NP_625758.1">
    <property type="nucleotide sequence ID" value="NC_003888.3"/>
</dbReference>
<dbReference type="RefSeq" id="WP_003977348.1">
    <property type="nucleotide sequence ID" value="NZ_VNID01000021.1"/>
</dbReference>
<dbReference type="PDB" id="7VPD">
    <property type="method" value="EM"/>
    <property type="resolution" value="3.77 A"/>
    <property type="chains" value="E=1-90"/>
</dbReference>
<dbReference type="PDB" id="7VPZ">
    <property type="method" value="EM"/>
    <property type="resolution" value="4.14 A"/>
    <property type="chains" value="E=1-90"/>
</dbReference>
<dbReference type="PDB" id="7X74">
    <property type="method" value="EM"/>
    <property type="resolution" value="3.70 A"/>
    <property type="chains" value="E=1-90"/>
</dbReference>
<dbReference type="PDB" id="7X75">
    <property type="method" value="EM"/>
    <property type="resolution" value="3.45 A"/>
    <property type="chains" value="E=1-90"/>
</dbReference>
<dbReference type="PDB" id="7X76">
    <property type="method" value="EM"/>
    <property type="resolution" value="3.67 A"/>
    <property type="chains" value="E=1-90"/>
</dbReference>
<dbReference type="PDB" id="8HVR">
    <property type="method" value="EM"/>
    <property type="resolution" value="3.35 A"/>
    <property type="chains" value="E=1-90"/>
</dbReference>
<dbReference type="PDB" id="8JKE">
    <property type="method" value="EM"/>
    <property type="resolution" value="3.67 A"/>
    <property type="chains" value="E=1-90"/>
</dbReference>
<dbReference type="PDB" id="8K60">
    <property type="method" value="EM"/>
    <property type="resolution" value="3.40 A"/>
    <property type="chains" value="E=1-90"/>
</dbReference>
<dbReference type="PDBsum" id="7VPD"/>
<dbReference type="PDBsum" id="7VPZ"/>
<dbReference type="PDBsum" id="7X74"/>
<dbReference type="PDBsum" id="7X75"/>
<dbReference type="PDBsum" id="7X76"/>
<dbReference type="PDBsum" id="8HVR"/>
<dbReference type="PDBsum" id="8JKE"/>
<dbReference type="PDBsum" id="8K60"/>
<dbReference type="EMDB" id="EMD-32063"/>
<dbReference type="EMDB" id="EMD-32077"/>
<dbReference type="EMDB" id="EMD-33031"/>
<dbReference type="EMDB" id="EMD-33032"/>
<dbReference type="EMDB" id="EMD-33033"/>
<dbReference type="EMDB" id="EMD-35047"/>
<dbReference type="EMDB" id="EMD-36370"/>
<dbReference type="EMDB" id="EMD-36914"/>
<dbReference type="SMR" id="Q9KXS1"/>
<dbReference type="FunCoup" id="Q9KXS1">
    <property type="interactions" value="6"/>
</dbReference>
<dbReference type="STRING" id="100226.gene:17759064"/>
<dbReference type="PaxDb" id="100226-SCO1478"/>
<dbReference type="GeneID" id="97466154"/>
<dbReference type="KEGG" id="sco:SCO1478"/>
<dbReference type="PATRIC" id="fig|100226.15.peg.1487"/>
<dbReference type="eggNOG" id="COG1758">
    <property type="taxonomic scope" value="Bacteria"/>
</dbReference>
<dbReference type="HOGENOM" id="CLU_125406_1_1_11"/>
<dbReference type="InParanoid" id="Q9KXS1"/>
<dbReference type="OrthoDB" id="8481372at2"/>
<dbReference type="PhylomeDB" id="Q9KXS1"/>
<dbReference type="Proteomes" id="UP000001973">
    <property type="component" value="Chromosome"/>
</dbReference>
<dbReference type="GO" id="GO:0000345">
    <property type="term" value="C:cytosolic DNA-directed RNA polymerase complex"/>
    <property type="evidence" value="ECO:0000318"/>
    <property type="project" value="GO_Central"/>
</dbReference>
<dbReference type="GO" id="GO:0001000">
    <property type="term" value="F:bacterial-type RNA polymerase core enzyme binding"/>
    <property type="evidence" value="ECO:0000318"/>
    <property type="project" value="GO_Central"/>
</dbReference>
<dbReference type="GO" id="GO:0003677">
    <property type="term" value="F:DNA binding"/>
    <property type="evidence" value="ECO:0007669"/>
    <property type="project" value="UniProtKB-UniRule"/>
</dbReference>
<dbReference type="GO" id="GO:0003899">
    <property type="term" value="F:DNA-directed RNA polymerase activity"/>
    <property type="evidence" value="ECO:0007669"/>
    <property type="project" value="UniProtKB-UniRule"/>
</dbReference>
<dbReference type="GO" id="GO:0006352">
    <property type="term" value="P:DNA-templated transcription initiation"/>
    <property type="evidence" value="ECO:0000318"/>
    <property type="project" value="GO_Central"/>
</dbReference>
<dbReference type="Gene3D" id="3.90.940.10">
    <property type="match status" value="1"/>
</dbReference>
<dbReference type="HAMAP" id="MF_00366">
    <property type="entry name" value="RNApol_bact_RpoZ"/>
    <property type="match status" value="1"/>
</dbReference>
<dbReference type="InterPro" id="IPR003716">
    <property type="entry name" value="DNA-dir_RNA_pol_omega"/>
</dbReference>
<dbReference type="InterPro" id="IPR006110">
    <property type="entry name" value="Pol_omega/Rpo6/RPB6"/>
</dbReference>
<dbReference type="InterPro" id="IPR036161">
    <property type="entry name" value="RPB6/omega-like_sf"/>
</dbReference>
<dbReference type="NCBIfam" id="TIGR00690">
    <property type="entry name" value="rpoZ"/>
    <property type="match status" value="1"/>
</dbReference>
<dbReference type="PANTHER" id="PTHR34476">
    <property type="entry name" value="DNA-DIRECTED RNA POLYMERASE SUBUNIT OMEGA"/>
    <property type="match status" value="1"/>
</dbReference>
<dbReference type="PANTHER" id="PTHR34476:SF1">
    <property type="entry name" value="DNA-DIRECTED RNA POLYMERASE SUBUNIT OMEGA"/>
    <property type="match status" value="1"/>
</dbReference>
<dbReference type="Pfam" id="PF01192">
    <property type="entry name" value="RNA_pol_Rpb6"/>
    <property type="match status" value="1"/>
</dbReference>
<dbReference type="SMART" id="SM01409">
    <property type="entry name" value="RNA_pol_Rpb6"/>
    <property type="match status" value="1"/>
</dbReference>
<dbReference type="SUPFAM" id="SSF63562">
    <property type="entry name" value="RPB6/omega subunit-like"/>
    <property type="match status" value="1"/>
</dbReference>
<name>RPOZ_STRCO</name>
<keyword id="KW-0002">3D-structure</keyword>
<keyword id="KW-0240">DNA-directed RNA polymerase</keyword>
<keyword id="KW-0548">Nucleotidyltransferase</keyword>
<keyword id="KW-1185">Reference proteome</keyword>
<keyword id="KW-0804">Transcription</keyword>
<keyword id="KW-0808">Transferase</keyword>
<evidence type="ECO:0000250" key="1"/>
<evidence type="ECO:0000269" key="2">
    <source>
    </source>
</evidence>
<evidence type="ECO:0000305" key="3"/>
<evidence type="ECO:0007829" key="4">
    <source>
        <dbReference type="PDB" id="8HVR"/>
    </source>
</evidence>
<sequence>MSSSISAPEGIINPPIDELLEATDSKYSLVIYAAKRARQINAYYSQLGEGLLEYVGPLVDTHVHEKPLSIALREINAGLLTSEAIEGPAQ</sequence>
<accession>Q9KXS1</accession>